<accession>A5V094</accession>
<feature type="chain" id="PRO_0000367211" description="UPF0173 metal-dependent hydrolase RoseRS_3945">
    <location>
        <begin position="1"/>
        <end position="244"/>
    </location>
</feature>
<proteinExistence type="inferred from homology"/>
<comment type="similarity">
    <text evidence="1">Belongs to the UPF0173 family.</text>
</comment>
<sequence>MATIGRETTISWLGHGTFHILTPGGKKVLIDAWVDGNPSCPDEWKQRVRSEGLDVIFLTHGHFDHIADILALANETSATIVGQFDITSWIASKGVSQDRLVGFNKGGTVEVAGIRATMTHATHSSTFTDNGVIVPMGTEAGYVLRMENGFTIYHTGDTAVTMDMQIIGDLYHPELVILPIGDHFTMDPMQAAYALKLIRPTFAIPEHYGTFPILRGTPDQLREQCNAFGVNVTVIDLKPGESVS</sequence>
<keyword id="KW-0378">Hydrolase</keyword>
<protein>
    <recommendedName>
        <fullName evidence="1">UPF0173 metal-dependent hydrolase RoseRS_3945</fullName>
    </recommendedName>
</protein>
<name>Y3945_ROSS1</name>
<dbReference type="EMBL" id="CP000686">
    <property type="protein sequence ID" value="ABQ92297.1"/>
    <property type="molecule type" value="Genomic_DNA"/>
</dbReference>
<dbReference type="RefSeq" id="WP_011958637.1">
    <property type="nucleotide sequence ID" value="NC_009523.1"/>
</dbReference>
<dbReference type="SMR" id="A5V094"/>
<dbReference type="STRING" id="357808.RoseRS_3945"/>
<dbReference type="KEGG" id="rrs:RoseRS_3945"/>
<dbReference type="eggNOG" id="COG2220">
    <property type="taxonomic scope" value="Bacteria"/>
</dbReference>
<dbReference type="HOGENOM" id="CLU_070010_4_0_0"/>
<dbReference type="OrthoDB" id="9805728at2"/>
<dbReference type="Proteomes" id="UP000006554">
    <property type="component" value="Chromosome"/>
</dbReference>
<dbReference type="GO" id="GO:0016787">
    <property type="term" value="F:hydrolase activity"/>
    <property type="evidence" value="ECO:0007669"/>
    <property type="project" value="UniProtKB-UniRule"/>
</dbReference>
<dbReference type="Gene3D" id="3.60.15.10">
    <property type="entry name" value="Ribonuclease Z/Hydroxyacylglutathione hydrolase-like"/>
    <property type="match status" value="1"/>
</dbReference>
<dbReference type="HAMAP" id="MF_00457">
    <property type="entry name" value="UPF0173"/>
    <property type="match status" value="1"/>
</dbReference>
<dbReference type="InterPro" id="IPR001279">
    <property type="entry name" value="Metallo-B-lactamas"/>
</dbReference>
<dbReference type="InterPro" id="IPR036866">
    <property type="entry name" value="RibonucZ/Hydroxyglut_hydro"/>
</dbReference>
<dbReference type="InterPro" id="IPR022877">
    <property type="entry name" value="UPF0173"/>
</dbReference>
<dbReference type="InterPro" id="IPR050114">
    <property type="entry name" value="UPF0173_UPF0282_UlaG_hydrolase"/>
</dbReference>
<dbReference type="NCBIfam" id="NF001911">
    <property type="entry name" value="PRK00685.1"/>
    <property type="match status" value="1"/>
</dbReference>
<dbReference type="PANTHER" id="PTHR43546:SF3">
    <property type="entry name" value="UPF0173 METAL-DEPENDENT HYDROLASE MJ1163"/>
    <property type="match status" value="1"/>
</dbReference>
<dbReference type="PANTHER" id="PTHR43546">
    <property type="entry name" value="UPF0173 METAL-DEPENDENT HYDROLASE MJ1163-RELATED"/>
    <property type="match status" value="1"/>
</dbReference>
<dbReference type="Pfam" id="PF12706">
    <property type="entry name" value="Lactamase_B_2"/>
    <property type="match status" value="1"/>
</dbReference>
<dbReference type="SMART" id="SM00849">
    <property type="entry name" value="Lactamase_B"/>
    <property type="match status" value="1"/>
</dbReference>
<dbReference type="SUPFAM" id="SSF56281">
    <property type="entry name" value="Metallo-hydrolase/oxidoreductase"/>
    <property type="match status" value="1"/>
</dbReference>
<organism>
    <name type="scientific">Roseiflexus sp. (strain RS-1)</name>
    <dbReference type="NCBI Taxonomy" id="357808"/>
    <lineage>
        <taxon>Bacteria</taxon>
        <taxon>Bacillati</taxon>
        <taxon>Chloroflexota</taxon>
        <taxon>Chloroflexia</taxon>
        <taxon>Chloroflexales</taxon>
        <taxon>Roseiflexineae</taxon>
        <taxon>Roseiflexaceae</taxon>
        <taxon>Roseiflexus</taxon>
    </lineage>
</organism>
<evidence type="ECO:0000255" key="1">
    <source>
        <dbReference type="HAMAP-Rule" id="MF_00457"/>
    </source>
</evidence>
<reference key="1">
    <citation type="submission" date="2007-04" db="EMBL/GenBank/DDBJ databases">
        <title>Complete sequence of Roseiflexus sp. RS-1.</title>
        <authorList>
            <consortium name="US DOE Joint Genome Institute"/>
            <person name="Copeland A."/>
            <person name="Lucas S."/>
            <person name="Lapidus A."/>
            <person name="Barry K."/>
            <person name="Detter J.C."/>
            <person name="Glavina del Rio T."/>
            <person name="Hammon N."/>
            <person name="Israni S."/>
            <person name="Dalin E."/>
            <person name="Tice H."/>
            <person name="Pitluck S."/>
            <person name="Chertkov O."/>
            <person name="Brettin T."/>
            <person name="Bruce D."/>
            <person name="Han C."/>
            <person name="Schmutz J."/>
            <person name="Larimer F."/>
            <person name="Land M."/>
            <person name="Hauser L."/>
            <person name="Kyrpides N."/>
            <person name="Mikhailova N."/>
            <person name="Bryant D.A."/>
            <person name="Richardson P."/>
        </authorList>
    </citation>
    <scope>NUCLEOTIDE SEQUENCE [LARGE SCALE GENOMIC DNA]</scope>
    <source>
        <strain>RS-1</strain>
    </source>
</reference>
<gene>
    <name type="ordered locus">RoseRS_3945</name>
</gene>